<proteinExistence type="evidence at protein level"/>
<dbReference type="STRING" id="9755.ENSPCTP00005019472"/>
<dbReference type="GlyCosmos" id="P25329">
    <property type="glycosylation" value="2 sites, No reported glycans"/>
</dbReference>
<dbReference type="InParanoid" id="P25329"/>
<dbReference type="Proteomes" id="UP000248484">
    <property type="component" value="Unplaced"/>
</dbReference>
<dbReference type="GO" id="GO:0005615">
    <property type="term" value="C:extracellular space"/>
    <property type="evidence" value="ECO:0000250"/>
    <property type="project" value="UniProtKB"/>
</dbReference>
<dbReference type="GO" id="GO:0016914">
    <property type="term" value="C:follicle-stimulating hormone complex"/>
    <property type="evidence" value="ECO:0000250"/>
    <property type="project" value="UniProtKB"/>
</dbReference>
<dbReference type="GO" id="GO:0016913">
    <property type="term" value="F:follicle-stimulating hormone activity"/>
    <property type="evidence" value="ECO:0000250"/>
    <property type="project" value="UniProtKB"/>
</dbReference>
<dbReference type="GO" id="GO:0007186">
    <property type="term" value="P:G protein-coupled receptor signaling pathway"/>
    <property type="evidence" value="ECO:0000250"/>
    <property type="project" value="UniProtKB"/>
</dbReference>
<dbReference type="GO" id="GO:0010893">
    <property type="term" value="P:positive regulation of steroid biosynthetic process"/>
    <property type="evidence" value="ECO:0000250"/>
    <property type="project" value="UniProtKB"/>
</dbReference>
<dbReference type="GO" id="GO:0010469">
    <property type="term" value="P:regulation of signaling receptor activity"/>
    <property type="evidence" value="ECO:0000250"/>
    <property type="project" value="UniProtKB"/>
</dbReference>
<dbReference type="GO" id="GO:0006590">
    <property type="term" value="P:thyroid hormone generation"/>
    <property type="evidence" value="ECO:0007669"/>
    <property type="project" value="TreeGrafter"/>
</dbReference>
<dbReference type="FunFam" id="2.10.90.10:FF:000011">
    <property type="entry name" value="Glycoprotein hormones alpha chain"/>
    <property type="match status" value="1"/>
</dbReference>
<dbReference type="Gene3D" id="2.10.90.10">
    <property type="entry name" value="Cystine-knot cytokines"/>
    <property type="match status" value="1"/>
</dbReference>
<dbReference type="InterPro" id="IPR029034">
    <property type="entry name" value="Cystine-knot_cytokine"/>
</dbReference>
<dbReference type="InterPro" id="IPR000476">
    <property type="entry name" value="Glyco_hormone"/>
</dbReference>
<dbReference type="PANTHER" id="PTHR11509">
    <property type="entry name" value="GLYCOPROTEIN HORMONE ALPHA CHAIN"/>
    <property type="match status" value="1"/>
</dbReference>
<dbReference type="PANTHER" id="PTHR11509:SF0">
    <property type="entry name" value="GLYCOPROTEIN HORMONES ALPHA CHAIN"/>
    <property type="match status" value="1"/>
</dbReference>
<dbReference type="Pfam" id="PF00236">
    <property type="entry name" value="Hormone_6"/>
    <property type="match status" value="1"/>
</dbReference>
<dbReference type="PRINTS" id="PR00274">
    <property type="entry name" value="GLYCOHORMONE"/>
</dbReference>
<dbReference type="SMART" id="SM00067">
    <property type="entry name" value="GHA"/>
    <property type="match status" value="1"/>
</dbReference>
<dbReference type="SUPFAM" id="SSF57501">
    <property type="entry name" value="Cystine-knot cytokines"/>
    <property type="match status" value="1"/>
</dbReference>
<dbReference type="PROSITE" id="PS00779">
    <property type="entry name" value="GLYCO_HORMONE_ALPHA_1"/>
    <property type="match status" value="1"/>
</dbReference>
<dbReference type="PROSITE" id="PS00780">
    <property type="entry name" value="GLYCO_HORMONE_ALPHA_2"/>
    <property type="match status" value="1"/>
</dbReference>
<dbReference type="PROSITE" id="PS50277">
    <property type="entry name" value="GLYCO_HORMONE_ALPHA_3"/>
    <property type="match status" value="1"/>
</dbReference>
<accession>P25329</accession>
<name>GLHA_PHYMC</name>
<gene>
    <name type="primary">CGA</name>
</gene>
<feature type="chain" id="PRO_0000149030" description="Glycoprotein hormones alpha chain">
    <location>
        <begin position="1"/>
        <end position="96"/>
    </location>
</feature>
<feature type="glycosylation site" description="N-linked (GlcNAc...) asparagine" evidence="1">
    <location>
        <position position="56"/>
    </location>
</feature>
<feature type="glycosylation site" description="N-linked (GlcNAc...) asparagine" evidence="1">
    <location>
        <position position="82"/>
    </location>
</feature>
<feature type="disulfide bond" evidence="1">
    <location>
        <begin position="11"/>
        <end position="35"/>
    </location>
</feature>
<feature type="disulfide bond" evidence="1">
    <location>
        <begin position="14"/>
        <end position="64"/>
    </location>
</feature>
<feature type="disulfide bond" evidence="1">
    <location>
        <begin position="32"/>
        <end position="86"/>
    </location>
</feature>
<feature type="disulfide bond" evidence="1">
    <location>
        <begin position="36"/>
        <end position="88"/>
    </location>
</feature>
<feature type="disulfide bond" evidence="1">
    <location>
        <begin position="63"/>
        <end position="91"/>
    </location>
</feature>
<organism>
    <name type="scientific">Physeter macrocephalus</name>
    <name type="common">Sperm whale</name>
    <name type="synonym">Physeter catodon</name>
    <dbReference type="NCBI Taxonomy" id="9755"/>
    <lineage>
        <taxon>Eukaryota</taxon>
        <taxon>Metazoa</taxon>
        <taxon>Chordata</taxon>
        <taxon>Craniata</taxon>
        <taxon>Vertebrata</taxon>
        <taxon>Euteleostomi</taxon>
        <taxon>Mammalia</taxon>
        <taxon>Eutheria</taxon>
        <taxon>Laurasiatheria</taxon>
        <taxon>Artiodactyla</taxon>
        <taxon>Whippomorpha</taxon>
        <taxon>Cetacea</taxon>
        <taxon>Odontoceti</taxon>
        <taxon>Physeteridae</taxon>
        <taxon>Physeter</taxon>
    </lineage>
</organism>
<sequence>FPNGZFTMQGCPZCKLKQNKYFSKLGAPIYZCMGCCFSRAYPTPARSKKTMLVPKNITSZATCCVAKAFTKATVMGNARVQNHTZCHCSTCYYHKS</sequence>
<comment type="function">
    <text evidence="1">Shared alpha chain of the active heterodimeric glycoprotein hormones thyrotropin/thyroid stimulating hormone/TSH, lutropin/luteinizing hormone/LH and follitropin/follicle stimulating hormone/FSH. These hormones bind specific receptors on target cells that in turn activate downstream signaling pathways.</text>
</comment>
<comment type="subunit">
    <text evidence="1">Heterodimer. The active hormones thyrotropin, lutropin and follitropin are heterodimers composed of CGA, a common alpha chain described here and a unique beta chain which confers their biological specificity to the hormones: TSHB for thyrotropin, LHB for lutropin and FSHB for follitropin.</text>
</comment>
<comment type="subcellular location">
    <subcellularLocation>
        <location evidence="1">Secreted</location>
    </subcellularLocation>
</comment>
<comment type="similarity">
    <text evidence="2">Belongs to the glycoprotein hormones subunit alpha family.</text>
</comment>
<evidence type="ECO:0000250" key="1">
    <source>
        <dbReference type="UniProtKB" id="P01215"/>
    </source>
</evidence>
<evidence type="ECO:0000305" key="2"/>
<keyword id="KW-0903">Direct protein sequencing</keyword>
<keyword id="KW-1015">Disulfide bond</keyword>
<keyword id="KW-0325">Glycoprotein</keyword>
<keyword id="KW-0372">Hormone</keyword>
<keyword id="KW-1185">Reference proteome</keyword>
<keyword id="KW-0964">Secreted</keyword>
<reference key="1">
    <citation type="journal article" date="1986" name="Int. J. Pept. Protein Res.">
        <title>Primary structure of sperm whale luteinizing hormone.</title>
        <authorList>
            <person name="Pankov Y.A."/>
            <person name="Karasyov V.S."/>
        </authorList>
    </citation>
    <scope>PROTEIN SEQUENCE</scope>
</reference>
<protein>
    <recommendedName>
        <fullName>Glycoprotein hormones alpha chain</fullName>
    </recommendedName>
    <alternativeName>
        <fullName>Anterior pituitary glycoprotein hormones common subunit alpha</fullName>
    </alternativeName>
    <alternativeName>
        <fullName>Follicle-stimulating hormone alpha chain</fullName>
        <shortName>FSH-alpha</shortName>
    </alternativeName>
    <alternativeName>
        <fullName>Follitropin alpha chain</fullName>
    </alternativeName>
    <alternativeName>
        <fullName>Luteinizing hormone alpha chain</fullName>
        <shortName>LSH-alpha</shortName>
    </alternativeName>
    <alternativeName>
        <fullName>Lutropin alpha chain</fullName>
    </alternativeName>
    <alternativeName>
        <fullName>Thyroid-stimulating hormone alpha chain</fullName>
        <shortName>TSH-alpha</shortName>
    </alternativeName>
    <alternativeName>
        <fullName>Thyrotropin alpha chain</fullName>
    </alternativeName>
</protein>